<proteinExistence type="inferred from homology"/>
<gene>
    <name evidence="1" type="primary">def</name>
    <name type="ordered locus">SNSL254_A3675</name>
</gene>
<dbReference type="EC" id="3.5.1.88" evidence="1"/>
<dbReference type="EMBL" id="CP001113">
    <property type="protein sequence ID" value="ACF63449.1"/>
    <property type="molecule type" value="Genomic_DNA"/>
</dbReference>
<dbReference type="RefSeq" id="WP_000114987.1">
    <property type="nucleotide sequence ID" value="NZ_CCMR01000003.1"/>
</dbReference>
<dbReference type="SMR" id="B4SUQ8"/>
<dbReference type="KEGG" id="see:SNSL254_A3675"/>
<dbReference type="HOGENOM" id="CLU_061901_2_1_6"/>
<dbReference type="Proteomes" id="UP000008824">
    <property type="component" value="Chromosome"/>
</dbReference>
<dbReference type="GO" id="GO:0046872">
    <property type="term" value="F:metal ion binding"/>
    <property type="evidence" value="ECO:0007669"/>
    <property type="project" value="UniProtKB-KW"/>
</dbReference>
<dbReference type="GO" id="GO:0042586">
    <property type="term" value="F:peptide deformylase activity"/>
    <property type="evidence" value="ECO:0007669"/>
    <property type="project" value="UniProtKB-UniRule"/>
</dbReference>
<dbReference type="GO" id="GO:0043686">
    <property type="term" value="P:co-translational protein modification"/>
    <property type="evidence" value="ECO:0007669"/>
    <property type="project" value="TreeGrafter"/>
</dbReference>
<dbReference type="GO" id="GO:0006412">
    <property type="term" value="P:translation"/>
    <property type="evidence" value="ECO:0007669"/>
    <property type="project" value="UniProtKB-UniRule"/>
</dbReference>
<dbReference type="CDD" id="cd00487">
    <property type="entry name" value="Pep_deformylase"/>
    <property type="match status" value="1"/>
</dbReference>
<dbReference type="FunFam" id="3.90.45.10:FF:000001">
    <property type="entry name" value="Peptide deformylase"/>
    <property type="match status" value="1"/>
</dbReference>
<dbReference type="Gene3D" id="3.90.45.10">
    <property type="entry name" value="Peptide deformylase"/>
    <property type="match status" value="1"/>
</dbReference>
<dbReference type="HAMAP" id="MF_00163">
    <property type="entry name" value="Pep_deformylase"/>
    <property type="match status" value="1"/>
</dbReference>
<dbReference type="InterPro" id="IPR023635">
    <property type="entry name" value="Peptide_deformylase"/>
</dbReference>
<dbReference type="InterPro" id="IPR036821">
    <property type="entry name" value="Peptide_deformylase_sf"/>
</dbReference>
<dbReference type="NCBIfam" id="TIGR00079">
    <property type="entry name" value="pept_deformyl"/>
    <property type="match status" value="1"/>
</dbReference>
<dbReference type="NCBIfam" id="NF001159">
    <property type="entry name" value="PRK00150.1-3"/>
    <property type="match status" value="1"/>
</dbReference>
<dbReference type="PANTHER" id="PTHR10458">
    <property type="entry name" value="PEPTIDE DEFORMYLASE"/>
    <property type="match status" value="1"/>
</dbReference>
<dbReference type="PANTHER" id="PTHR10458:SF21">
    <property type="entry name" value="PEPTIDE DEFORMYLASE"/>
    <property type="match status" value="1"/>
</dbReference>
<dbReference type="Pfam" id="PF01327">
    <property type="entry name" value="Pep_deformylase"/>
    <property type="match status" value="1"/>
</dbReference>
<dbReference type="PIRSF" id="PIRSF004749">
    <property type="entry name" value="Pep_def"/>
    <property type="match status" value="1"/>
</dbReference>
<dbReference type="PRINTS" id="PR01576">
    <property type="entry name" value="PDEFORMYLASE"/>
</dbReference>
<dbReference type="SUPFAM" id="SSF56420">
    <property type="entry name" value="Peptide deformylase"/>
    <property type="match status" value="1"/>
</dbReference>
<name>DEF_SALNS</name>
<comment type="function">
    <text evidence="1">Removes the formyl group from the N-terminal Met of newly synthesized proteins. Requires at least a dipeptide for an efficient rate of reaction. N-terminal L-methionine is a prerequisite for activity but the enzyme has broad specificity at other positions.</text>
</comment>
<comment type="catalytic activity">
    <reaction evidence="1">
        <text>N-terminal N-formyl-L-methionyl-[peptide] + H2O = N-terminal L-methionyl-[peptide] + formate</text>
        <dbReference type="Rhea" id="RHEA:24420"/>
        <dbReference type="Rhea" id="RHEA-COMP:10639"/>
        <dbReference type="Rhea" id="RHEA-COMP:10640"/>
        <dbReference type="ChEBI" id="CHEBI:15377"/>
        <dbReference type="ChEBI" id="CHEBI:15740"/>
        <dbReference type="ChEBI" id="CHEBI:49298"/>
        <dbReference type="ChEBI" id="CHEBI:64731"/>
        <dbReference type="EC" id="3.5.1.88"/>
    </reaction>
</comment>
<comment type="cofactor">
    <cofactor evidence="1">
        <name>Fe(2+)</name>
        <dbReference type="ChEBI" id="CHEBI:29033"/>
    </cofactor>
    <text evidence="1">Binds 1 Fe(2+) ion.</text>
</comment>
<comment type="similarity">
    <text evidence="1">Belongs to the polypeptide deformylase family.</text>
</comment>
<evidence type="ECO:0000255" key="1">
    <source>
        <dbReference type="HAMAP-Rule" id="MF_00163"/>
    </source>
</evidence>
<protein>
    <recommendedName>
        <fullName evidence="1">Peptide deformylase</fullName>
        <shortName evidence="1">PDF</shortName>
        <ecNumber evidence="1">3.5.1.88</ecNumber>
    </recommendedName>
    <alternativeName>
        <fullName evidence="1">Polypeptide deformylase</fullName>
    </alternativeName>
</protein>
<keyword id="KW-0378">Hydrolase</keyword>
<keyword id="KW-0408">Iron</keyword>
<keyword id="KW-0479">Metal-binding</keyword>
<keyword id="KW-0648">Protein biosynthesis</keyword>
<feature type="chain" id="PRO_1000097341" description="Peptide deformylase">
    <location>
        <begin position="1"/>
        <end position="169"/>
    </location>
</feature>
<feature type="active site" evidence="1">
    <location>
        <position position="134"/>
    </location>
</feature>
<feature type="binding site" evidence="1">
    <location>
        <position position="91"/>
    </location>
    <ligand>
        <name>Fe cation</name>
        <dbReference type="ChEBI" id="CHEBI:24875"/>
    </ligand>
</feature>
<feature type="binding site" evidence="1">
    <location>
        <position position="133"/>
    </location>
    <ligand>
        <name>Fe cation</name>
        <dbReference type="ChEBI" id="CHEBI:24875"/>
    </ligand>
</feature>
<feature type="binding site" evidence="1">
    <location>
        <position position="137"/>
    </location>
    <ligand>
        <name>Fe cation</name>
        <dbReference type="ChEBI" id="CHEBI:24875"/>
    </ligand>
</feature>
<accession>B4SUQ8</accession>
<organism>
    <name type="scientific">Salmonella newport (strain SL254)</name>
    <dbReference type="NCBI Taxonomy" id="423368"/>
    <lineage>
        <taxon>Bacteria</taxon>
        <taxon>Pseudomonadati</taxon>
        <taxon>Pseudomonadota</taxon>
        <taxon>Gammaproteobacteria</taxon>
        <taxon>Enterobacterales</taxon>
        <taxon>Enterobacteriaceae</taxon>
        <taxon>Salmonella</taxon>
    </lineage>
</organism>
<sequence>MSVLQVLHIPDERLRKVAKPVEEVNAEIQRIVDDMFETMYAEEGIGLAATQVDIHQRIIVIDVSENRDERLVLINPELLEKSGETGIEEGCLSIPEQRALVPRAEKVKIRALDRDGNPFELEADGLLAICIQHEMDHLVGKLFIDYLSPLKQQRIRQKVEKLDRLNARA</sequence>
<reference key="1">
    <citation type="journal article" date="2011" name="J. Bacteriol.">
        <title>Comparative genomics of 28 Salmonella enterica isolates: evidence for CRISPR-mediated adaptive sublineage evolution.</title>
        <authorList>
            <person name="Fricke W.F."/>
            <person name="Mammel M.K."/>
            <person name="McDermott P.F."/>
            <person name="Tartera C."/>
            <person name="White D.G."/>
            <person name="Leclerc J.E."/>
            <person name="Ravel J."/>
            <person name="Cebula T.A."/>
        </authorList>
    </citation>
    <scope>NUCLEOTIDE SEQUENCE [LARGE SCALE GENOMIC DNA]</scope>
    <source>
        <strain>SL254</strain>
    </source>
</reference>